<protein>
    <recommendedName>
        <fullName evidence="1">Uridine kinase</fullName>
        <ecNumber evidence="1">2.7.1.48</ecNumber>
    </recommendedName>
    <alternativeName>
        <fullName evidence="1">Cytidine monophosphokinase</fullName>
    </alternativeName>
    <alternativeName>
        <fullName evidence="1">Uridine monophosphokinase</fullName>
    </alternativeName>
</protein>
<keyword id="KW-0067">ATP-binding</keyword>
<keyword id="KW-0963">Cytoplasm</keyword>
<keyword id="KW-0418">Kinase</keyword>
<keyword id="KW-0547">Nucleotide-binding</keyword>
<keyword id="KW-0808">Transferase</keyword>
<proteinExistence type="inferred from homology"/>
<organism>
    <name type="scientific">Lactobacillus helveticus (strain DPC 4571)</name>
    <dbReference type="NCBI Taxonomy" id="405566"/>
    <lineage>
        <taxon>Bacteria</taxon>
        <taxon>Bacillati</taxon>
        <taxon>Bacillota</taxon>
        <taxon>Bacilli</taxon>
        <taxon>Lactobacillales</taxon>
        <taxon>Lactobacillaceae</taxon>
        <taxon>Lactobacillus</taxon>
    </lineage>
</organism>
<sequence length="211" mass="24234">MMGKLEKPVIIGIAGGSGSGKTTIAHEIANNINEHDRIMIMSQDSYYQDNTGVPMEKRMKINYDHPDAFDMPLLEAQLNQLLHRKPIELPTYDFTQHTRSNETIHVEPADIIILEGILVLFNEDIRNLMDIKVYVDTDDDIRFIRRLERDMKERGRSLDSVINQYLGTVKPMYNQFIEPTKRYADIIVPEGGENDVAIDMLTTKLQSVLNQ</sequence>
<name>URK_LACH4</name>
<dbReference type="EC" id="2.7.1.48" evidence="1"/>
<dbReference type="EMBL" id="CP000517">
    <property type="protein sequence ID" value="ABX26767.1"/>
    <property type="molecule type" value="Genomic_DNA"/>
</dbReference>
<dbReference type="SMR" id="A8YU29"/>
<dbReference type="KEGG" id="lhe:lhv_0596"/>
<dbReference type="eggNOG" id="COG0572">
    <property type="taxonomic scope" value="Bacteria"/>
</dbReference>
<dbReference type="HOGENOM" id="CLU_021278_1_2_9"/>
<dbReference type="UniPathway" id="UPA00574">
    <property type="reaction ID" value="UER00637"/>
</dbReference>
<dbReference type="UniPathway" id="UPA00579">
    <property type="reaction ID" value="UER00640"/>
</dbReference>
<dbReference type="Proteomes" id="UP000000790">
    <property type="component" value="Chromosome"/>
</dbReference>
<dbReference type="GO" id="GO:0005737">
    <property type="term" value="C:cytoplasm"/>
    <property type="evidence" value="ECO:0007669"/>
    <property type="project" value="UniProtKB-SubCell"/>
</dbReference>
<dbReference type="GO" id="GO:0005524">
    <property type="term" value="F:ATP binding"/>
    <property type="evidence" value="ECO:0007669"/>
    <property type="project" value="UniProtKB-UniRule"/>
</dbReference>
<dbReference type="GO" id="GO:0016887">
    <property type="term" value="F:ATP hydrolysis activity"/>
    <property type="evidence" value="ECO:0007669"/>
    <property type="project" value="InterPro"/>
</dbReference>
<dbReference type="GO" id="GO:0043771">
    <property type="term" value="F:cytidine kinase activity"/>
    <property type="evidence" value="ECO:0007669"/>
    <property type="project" value="RHEA"/>
</dbReference>
<dbReference type="GO" id="GO:0004849">
    <property type="term" value="F:uridine kinase activity"/>
    <property type="evidence" value="ECO:0007669"/>
    <property type="project" value="UniProtKB-UniRule"/>
</dbReference>
<dbReference type="GO" id="GO:0044211">
    <property type="term" value="P:CTP salvage"/>
    <property type="evidence" value="ECO:0007669"/>
    <property type="project" value="UniProtKB-UniRule"/>
</dbReference>
<dbReference type="GO" id="GO:0044206">
    <property type="term" value="P:UMP salvage"/>
    <property type="evidence" value="ECO:0007669"/>
    <property type="project" value="UniProtKB-UniRule"/>
</dbReference>
<dbReference type="CDD" id="cd02023">
    <property type="entry name" value="UMPK"/>
    <property type="match status" value="1"/>
</dbReference>
<dbReference type="FunFam" id="3.40.50.300:FF:001802">
    <property type="entry name" value="Uridine-cytidine kinase 1"/>
    <property type="match status" value="1"/>
</dbReference>
<dbReference type="Gene3D" id="3.40.50.300">
    <property type="entry name" value="P-loop containing nucleotide triphosphate hydrolases"/>
    <property type="match status" value="1"/>
</dbReference>
<dbReference type="HAMAP" id="MF_00551">
    <property type="entry name" value="Uridine_kinase"/>
    <property type="match status" value="1"/>
</dbReference>
<dbReference type="InterPro" id="IPR003593">
    <property type="entry name" value="AAA+_ATPase"/>
</dbReference>
<dbReference type="InterPro" id="IPR027417">
    <property type="entry name" value="P-loop_NTPase"/>
</dbReference>
<dbReference type="InterPro" id="IPR006083">
    <property type="entry name" value="PRK/URK"/>
</dbReference>
<dbReference type="InterPro" id="IPR026008">
    <property type="entry name" value="Uridine_kinase"/>
</dbReference>
<dbReference type="InterPro" id="IPR000764">
    <property type="entry name" value="Uridine_kinase-like"/>
</dbReference>
<dbReference type="NCBIfam" id="NF004018">
    <property type="entry name" value="PRK05480.1"/>
    <property type="match status" value="1"/>
</dbReference>
<dbReference type="NCBIfam" id="TIGR00235">
    <property type="entry name" value="udk"/>
    <property type="match status" value="1"/>
</dbReference>
<dbReference type="PANTHER" id="PTHR10285">
    <property type="entry name" value="URIDINE KINASE"/>
    <property type="match status" value="1"/>
</dbReference>
<dbReference type="Pfam" id="PF00485">
    <property type="entry name" value="PRK"/>
    <property type="match status" value="1"/>
</dbReference>
<dbReference type="PRINTS" id="PR00988">
    <property type="entry name" value="URIDINKINASE"/>
</dbReference>
<dbReference type="SMART" id="SM00382">
    <property type="entry name" value="AAA"/>
    <property type="match status" value="1"/>
</dbReference>
<dbReference type="SUPFAM" id="SSF52540">
    <property type="entry name" value="P-loop containing nucleoside triphosphate hydrolases"/>
    <property type="match status" value="1"/>
</dbReference>
<comment type="catalytic activity">
    <reaction evidence="1">
        <text>uridine + ATP = UMP + ADP + H(+)</text>
        <dbReference type="Rhea" id="RHEA:16825"/>
        <dbReference type="ChEBI" id="CHEBI:15378"/>
        <dbReference type="ChEBI" id="CHEBI:16704"/>
        <dbReference type="ChEBI" id="CHEBI:30616"/>
        <dbReference type="ChEBI" id="CHEBI:57865"/>
        <dbReference type="ChEBI" id="CHEBI:456216"/>
        <dbReference type="EC" id="2.7.1.48"/>
    </reaction>
</comment>
<comment type="catalytic activity">
    <reaction evidence="1">
        <text>cytidine + ATP = CMP + ADP + H(+)</text>
        <dbReference type="Rhea" id="RHEA:24674"/>
        <dbReference type="ChEBI" id="CHEBI:15378"/>
        <dbReference type="ChEBI" id="CHEBI:17562"/>
        <dbReference type="ChEBI" id="CHEBI:30616"/>
        <dbReference type="ChEBI" id="CHEBI:60377"/>
        <dbReference type="ChEBI" id="CHEBI:456216"/>
        <dbReference type="EC" id="2.7.1.48"/>
    </reaction>
</comment>
<comment type="pathway">
    <text evidence="1">Pyrimidine metabolism; CTP biosynthesis via salvage pathway; CTP from cytidine: step 1/3.</text>
</comment>
<comment type="pathway">
    <text evidence="1">Pyrimidine metabolism; UMP biosynthesis via salvage pathway; UMP from uridine: step 1/1.</text>
</comment>
<comment type="subcellular location">
    <subcellularLocation>
        <location evidence="1">Cytoplasm</location>
    </subcellularLocation>
</comment>
<comment type="similarity">
    <text evidence="1">Belongs to the uridine kinase family.</text>
</comment>
<gene>
    <name evidence="1" type="primary">udk</name>
    <name type="ordered locus">lhv_0596</name>
</gene>
<feature type="chain" id="PRO_1000072557" description="Uridine kinase">
    <location>
        <begin position="1"/>
        <end position="211"/>
    </location>
</feature>
<feature type="binding site" evidence="1">
    <location>
        <begin position="15"/>
        <end position="22"/>
    </location>
    <ligand>
        <name>ATP</name>
        <dbReference type="ChEBI" id="CHEBI:30616"/>
    </ligand>
</feature>
<reference key="1">
    <citation type="journal article" date="2008" name="J. Bacteriol.">
        <title>Genome sequence of Lactobacillus helveticus: an organism distinguished by selective gene loss and IS element expansion.</title>
        <authorList>
            <person name="Callanan M."/>
            <person name="Kaleta P."/>
            <person name="O'Callaghan J."/>
            <person name="O'Sullivan O."/>
            <person name="Jordan K."/>
            <person name="McAuliffe O."/>
            <person name="Sangrador-Vegas A."/>
            <person name="Slattery L."/>
            <person name="Fitzgerald G.F."/>
            <person name="Beresford T."/>
            <person name="Ross R.P."/>
        </authorList>
    </citation>
    <scope>NUCLEOTIDE SEQUENCE [LARGE SCALE GENOMIC DNA]</scope>
    <source>
        <strain>DPC 4571</strain>
    </source>
</reference>
<accession>A8YU29</accession>
<evidence type="ECO:0000255" key="1">
    <source>
        <dbReference type="HAMAP-Rule" id="MF_00551"/>
    </source>
</evidence>